<comment type="function">
    <text evidence="1">Catalyzes the isomerization between 2-isopropylmalate and 3-isopropylmalate, via the formation of 2-isopropylmaleate.</text>
</comment>
<comment type="catalytic activity">
    <reaction evidence="1">
        <text>(2R,3S)-3-isopropylmalate = (2S)-2-isopropylmalate</text>
        <dbReference type="Rhea" id="RHEA:32287"/>
        <dbReference type="ChEBI" id="CHEBI:1178"/>
        <dbReference type="ChEBI" id="CHEBI:35121"/>
        <dbReference type="EC" id="4.2.1.33"/>
    </reaction>
</comment>
<comment type="cofactor">
    <cofactor evidence="1">
        <name>[4Fe-4S] cluster</name>
        <dbReference type="ChEBI" id="CHEBI:49883"/>
    </cofactor>
    <text evidence="1">Binds 1 [4Fe-4S] cluster per subunit.</text>
</comment>
<comment type="pathway">
    <text evidence="1">Amino-acid biosynthesis; L-leucine biosynthesis; L-leucine from 3-methyl-2-oxobutanoate: step 2/4.</text>
</comment>
<comment type="subunit">
    <text evidence="1">Heterodimer of LeuC and LeuD.</text>
</comment>
<comment type="similarity">
    <text evidence="1">Belongs to the aconitase/IPM isomerase family. LeuC type 1 subfamily.</text>
</comment>
<sequence length="469" mass="50712">MSAPRTLYDKIWDDHVVDQQEDGTCLLYIDRHLVHEVTSPQAFEGLRMAGRPVRHPEKTLAVVDHNVPTSPDRINGIQNEESRIQVEALARNAADFGVEYYSERDKRQGIVHIVGPEQGFTLPGMTIVCGDSHTSTHGAFGALAHGIGTSEVEHVLATQTLIQKKAKNMLVRVDGKLPAGVTAKDIVLAIIGEIGTAGGTGYVIEYAGEAIRSLSMEGRMTICNMSIEGGARAGLIAPDETTFEYIKGRPRAPQGETLEQAINYWKTLHSDEGAHFDKIVTLDAGSLPPIVSWGSSPEDVVSVTGVVPNPDDIADETKRASKWRALDYMGLKPGTKITDIAVDRVFIGSCTNGRIEDLRAAAKVVEGKKVAPTVNAMIVPGSGLVKEQAEAEGLHKIFIEAGFDWREPGCSMCLAMNDDRLKPGERCASTSNRNFEGRQGFKGRTHLVSPAMAAAAAIAGHFVDIRAWK</sequence>
<protein>
    <recommendedName>
        <fullName evidence="1">3-isopropylmalate dehydratase large subunit</fullName>
        <ecNumber evidence="1">4.2.1.33</ecNumber>
    </recommendedName>
    <alternativeName>
        <fullName evidence="1">Alpha-IPM isomerase</fullName>
        <shortName evidence="1">IPMI</shortName>
    </alternativeName>
    <alternativeName>
        <fullName evidence="1">Isopropylmalate isomerase</fullName>
    </alternativeName>
</protein>
<keyword id="KW-0004">4Fe-4S</keyword>
<keyword id="KW-0028">Amino-acid biosynthesis</keyword>
<keyword id="KW-0100">Branched-chain amino acid biosynthesis</keyword>
<keyword id="KW-0408">Iron</keyword>
<keyword id="KW-0411">Iron-sulfur</keyword>
<keyword id="KW-0432">Leucine biosynthesis</keyword>
<keyword id="KW-0456">Lyase</keyword>
<keyword id="KW-0479">Metal-binding</keyword>
<accession>A5VSN3</accession>
<feature type="chain" id="PRO_1000063532" description="3-isopropylmalate dehydratase large subunit">
    <location>
        <begin position="1"/>
        <end position="469"/>
    </location>
</feature>
<feature type="binding site" evidence="1">
    <location>
        <position position="350"/>
    </location>
    <ligand>
        <name>[4Fe-4S] cluster</name>
        <dbReference type="ChEBI" id="CHEBI:49883"/>
    </ligand>
</feature>
<feature type="binding site" evidence="1">
    <location>
        <position position="410"/>
    </location>
    <ligand>
        <name>[4Fe-4S] cluster</name>
        <dbReference type="ChEBI" id="CHEBI:49883"/>
    </ligand>
</feature>
<feature type="binding site" evidence="1">
    <location>
        <position position="413"/>
    </location>
    <ligand>
        <name>[4Fe-4S] cluster</name>
        <dbReference type="ChEBI" id="CHEBI:49883"/>
    </ligand>
</feature>
<evidence type="ECO:0000255" key="1">
    <source>
        <dbReference type="HAMAP-Rule" id="MF_01026"/>
    </source>
</evidence>
<name>LEUC_BRUO2</name>
<reference key="1">
    <citation type="journal article" date="2009" name="PLoS ONE">
        <title>Genome degradation in Brucella ovis corresponds with narrowing of its host range and tissue tropism.</title>
        <authorList>
            <person name="Tsolis R.M."/>
            <person name="Seshadri R."/>
            <person name="Santos R.L."/>
            <person name="Sangari F.J."/>
            <person name="Lobo J.M."/>
            <person name="de Jong M.F."/>
            <person name="Ren Q."/>
            <person name="Myers G."/>
            <person name="Brinkac L.M."/>
            <person name="Nelson W.C."/>
            <person name="Deboy R.T."/>
            <person name="Angiuoli S."/>
            <person name="Khouri H."/>
            <person name="Dimitrov G."/>
            <person name="Robinson J.R."/>
            <person name="Mulligan S."/>
            <person name="Walker R.L."/>
            <person name="Elzer P.E."/>
            <person name="Hassan K.A."/>
            <person name="Paulsen I.T."/>
        </authorList>
    </citation>
    <scope>NUCLEOTIDE SEQUENCE [LARGE SCALE GENOMIC DNA]</scope>
    <source>
        <strain>ATCC 25840 / 63/290 / NCTC 10512</strain>
    </source>
</reference>
<organism>
    <name type="scientific">Brucella ovis (strain ATCC 25840 / 63/290 / NCTC 10512)</name>
    <dbReference type="NCBI Taxonomy" id="444178"/>
    <lineage>
        <taxon>Bacteria</taxon>
        <taxon>Pseudomonadati</taxon>
        <taxon>Pseudomonadota</taxon>
        <taxon>Alphaproteobacteria</taxon>
        <taxon>Hyphomicrobiales</taxon>
        <taxon>Brucellaceae</taxon>
        <taxon>Brucella/Ochrobactrum group</taxon>
        <taxon>Brucella</taxon>
    </lineage>
</organism>
<dbReference type="EC" id="4.2.1.33" evidence="1"/>
<dbReference type="EMBL" id="CP000708">
    <property type="protein sequence ID" value="ABQ60732.1"/>
    <property type="molecule type" value="Genomic_DNA"/>
</dbReference>
<dbReference type="RefSeq" id="WP_002964974.1">
    <property type="nucleotide sequence ID" value="NC_009505.1"/>
</dbReference>
<dbReference type="SMR" id="A5VSN3"/>
<dbReference type="GeneID" id="93017762"/>
<dbReference type="KEGG" id="bov:BOV_1834"/>
<dbReference type="HOGENOM" id="CLU_006714_3_4_5"/>
<dbReference type="PhylomeDB" id="A5VSN3"/>
<dbReference type="UniPathway" id="UPA00048">
    <property type="reaction ID" value="UER00071"/>
</dbReference>
<dbReference type="PRO" id="PR:A5VSN3"/>
<dbReference type="Proteomes" id="UP000006383">
    <property type="component" value="Chromosome I"/>
</dbReference>
<dbReference type="GO" id="GO:0003861">
    <property type="term" value="F:3-isopropylmalate dehydratase activity"/>
    <property type="evidence" value="ECO:0007669"/>
    <property type="project" value="UniProtKB-UniRule"/>
</dbReference>
<dbReference type="GO" id="GO:0051539">
    <property type="term" value="F:4 iron, 4 sulfur cluster binding"/>
    <property type="evidence" value="ECO:0007669"/>
    <property type="project" value="UniProtKB-KW"/>
</dbReference>
<dbReference type="GO" id="GO:0046872">
    <property type="term" value="F:metal ion binding"/>
    <property type="evidence" value="ECO:0007669"/>
    <property type="project" value="UniProtKB-KW"/>
</dbReference>
<dbReference type="GO" id="GO:0009098">
    <property type="term" value="P:L-leucine biosynthetic process"/>
    <property type="evidence" value="ECO:0007669"/>
    <property type="project" value="UniProtKB-UniRule"/>
</dbReference>
<dbReference type="CDD" id="cd01583">
    <property type="entry name" value="IPMI"/>
    <property type="match status" value="1"/>
</dbReference>
<dbReference type="FunFam" id="3.30.499.10:FF:000006">
    <property type="entry name" value="3-isopropylmalate dehydratase large subunit"/>
    <property type="match status" value="1"/>
</dbReference>
<dbReference type="FunFam" id="3.30.499.10:FF:000007">
    <property type="entry name" value="3-isopropylmalate dehydratase large subunit"/>
    <property type="match status" value="1"/>
</dbReference>
<dbReference type="Gene3D" id="3.30.499.10">
    <property type="entry name" value="Aconitase, domain 3"/>
    <property type="match status" value="2"/>
</dbReference>
<dbReference type="HAMAP" id="MF_01026">
    <property type="entry name" value="LeuC_type1"/>
    <property type="match status" value="1"/>
</dbReference>
<dbReference type="InterPro" id="IPR004430">
    <property type="entry name" value="3-IsopropMal_deHydase_lsu"/>
</dbReference>
<dbReference type="InterPro" id="IPR015931">
    <property type="entry name" value="Acnase/IPM_dHydase_lsu_aba_1/3"/>
</dbReference>
<dbReference type="InterPro" id="IPR001030">
    <property type="entry name" value="Acoase/IPM_deHydtase_lsu_aba"/>
</dbReference>
<dbReference type="InterPro" id="IPR018136">
    <property type="entry name" value="Aconitase_4Fe-4S_BS"/>
</dbReference>
<dbReference type="InterPro" id="IPR036008">
    <property type="entry name" value="Aconitase_4Fe-4S_dom"/>
</dbReference>
<dbReference type="InterPro" id="IPR050067">
    <property type="entry name" value="IPM_dehydratase_rel_enz"/>
</dbReference>
<dbReference type="InterPro" id="IPR033941">
    <property type="entry name" value="IPMI_cat"/>
</dbReference>
<dbReference type="NCBIfam" id="TIGR00170">
    <property type="entry name" value="leuC"/>
    <property type="match status" value="1"/>
</dbReference>
<dbReference type="NCBIfam" id="NF004016">
    <property type="entry name" value="PRK05478.1"/>
    <property type="match status" value="1"/>
</dbReference>
<dbReference type="NCBIfam" id="NF009116">
    <property type="entry name" value="PRK12466.1"/>
    <property type="match status" value="1"/>
</dbReference>
<dbReference type="PANTHER" id="PTHR43822:SF9">
    <property type="entry name" value="3-ISOPROPYLMALATE DEHYDRATASE"/>
    <property type="match status" value="1"/>
</dbReference>
<dbReference type="PANTHER" id="PTHR43822">
    <property type="entry name" value="HOMOACONITASE, MITOCHONDRIAL-RELATED"/>
    <property type="match status" value="1"/>
</dbReference>
<dbReference type="Pfam" id="PF00330">
    <property type="entry name" value="Aconitase"/>
    <property type="match status" value="1"/>
</dbReference>
<dbReference type="PRINTS" id="PR00415">
    <property type="entry name" value="ACONITASE"/>
</dbReference>
<dbReference type="SUPFAM" id="SSF53732">
    <property type="entry name" value="Aconitase iron-sulfur domain"/>
    <property type="match status" value="1"/>
</dbReference>
<dbReference type="PROSITE" id="PS00450">
    <property type="entry name" value="ACONITASE_1"/>
    <property type="match status" value="1"/>
</dbReference>
<dbReference type="PROSITE" id="PS01244">
    <property type="entry name" value="ACONITASE_2"/>
    <property type="match status" value="1"/>
</dbReference>
<gene>
    <name evidence="1" type="primary">leuC</name>
    <name type="ordered locus">BOV_1834</name>
</gene>
<proteinExistence type="inferred from homology"/>